<evidence type="ECO:0000250" key="1"/>
<evidence type="ECO:0000255" key="2"/>
<evidence type="ECO:0000256" key="3">
    <source>
        <dbReference type="SAM" id="MobiDB-lite"/>
    </source>
</evidence>
<evidence type="ECO:0000305" key="4"/>
<organism>
    <name type="scientific">Ateles geoffroyi</name>
    <name type="common">Black-handed spider monkey</name>
    <name type="synonym">Geoffroy's spider monkey</name>
    <dbReference type="NCBI Taxonomy" id="9509"/>
    <lineage>
        <taxon>Eukaryota</taxon>
        <taxon>Metazoa</taxon>
        <taxon>Chordata</taxon>
        <taxon>Craniata</taxon>
        <taxon>Vertebrata</taxon>
        <taxon>Euteleostomi</taxon>
        <taxon>Mammalia</taxon>
        <taxon>Eutheria</taxon>
        <taxon>Euarchontoglires</taxon>
        <taxon>Primates</taxon>
        <taxon>Haplorrhini</taxon>
        <taxon>Platyrrhini</taxon>
        <taxon>Atelidae</taxon>
        <taxon>Atelinae</taxon>
        <taxon>Ateles</taxon>
    </lineage>
</organism>
<sequence length="156" mass="17541">MALEKSLALLPLLVLVLLVLGWVQPSLGKESRAKKFQRQHMDSDGSPSSNPTYCNDMMKRRNMTQGRCKPVNTFVHEPLVDVQDVCFQENVTCKNGQANCYKSSSSMHITDCRLTNGSRYPNCAYRTSQKERHIIVACEGNPYVPVHFDASVEDST</sequence>
<name>RNAS1_ATEGE</name>
<proteinExistence type="inferred from homology"/>
<protein>
    <recommendedName>
        <fullName>Ribonuclease pancreatic</fullName>
        <ecNumber>4.6.1.18</ecNumber>
    </recommendedName>
    <alternativeName>
        <fullName>RNase 1</fullName>
    </alternativeName>
    <alternativeName>
        <fullName>RNase A</fullName>
    </alternativeName>
</protein>
<accession>Q8SQ06</accession>
<feature type="signal peptide" evidence="1">
    <location>
        <begin position="1"/>
        <end position="28"/>
    </location>
</feature>
<feature type="chain" id="PRO_0000030914" description="Ribonuclease pancreatic">
    <location>
        <begin position="29"/>
        <end position="156"/>
    </location>
</feature>
<feature type="region of interest" description="Disordered" evidence="3">
    <location>
        <begin position="33"/>
        <end position="52"/>
    </location>
</feature>
<feature type="compositionally biased region" description="Basic and acidic residues" evidence="3">
    <location>
        <begin position="33"/>
        <end position="43"/>
    </location>
</feature>
<feature type="active site" description="Proton acceptor" evidence="1">
    <location>
        <position position="40"/>
    </location>
</feature>
<feature type="active site" description="Proton donor" evidence="1">
    <location>
        <position position="147"/>
    </location>
</feature>
<feature type="binding site" evidence="1">
    <location>
        <position position="35"/>
    </location>
    <ligand>
        <name>substrate</name>
    </ligand>
</feature>
<feature type="binding site" evidence="1">
    <location>
        <position position="38"/>
    </location>
    <ligand>
        <name>substrate</name>
    </ligand>
</feature>
<feature type="binding site" evidence="1">
    <location>
        <begin position="69"/>
        <end position="73"/>
    </location>
    <ligand>
        <name>substrate</name>
    </ligand>
</feature>
<feature type="binding site" evidence="1">
    <location>
        <position position="94"/>
    </location>
    <ligand>
        <name>substrate</name>
    </ligand>
</feature>
<feature type="binding site" evidence="1">
    <location>
        <position position="113"/>
    </location>
    <ligand>
        <name>substrate</name>
    </ligand>
</feature>
<feature type="glycosylation site" description="N-linked (GlcNAc...) asparagine" evidence="2">
    <location>
        <position position="62"/>
    </location>
</feature>
<feature type="glycosylation site" description="N-linked (GlcNAc...) asparagine" evidence="2">
    <location>
        <position position="90"/>
    </location>
</feature>
<feature type="glycosylation site" description="N-linked (GlcNAc...) asparagine" evidence="2">
    <location>
        <position position="116"/>
    </location>
</feature>
<feature type="disulfide bond" evidence="1">
    <location>
        <begin position="54"/>
        <end position="112"/>
    </location>
</feature>
<feature type="disulfide bond" evidence="1">
    <location>
        <begin position="68"/>
        <end position="123"/>
    </location>
</feature>
<feature type="disulfide bond" evidence="1">
    <location>
        <begin position="86"/>
        <end position="138"/>
    </location>
</feature>
<feature type="disulfide bond" evidence="1">
    <location>
        <begin position="93"/>
        <end position="100"/>
    </location>
</feature>
<comment type="function">
    <text evidence="1">Endonuclease that catalyzes the cleavage of RNA on the 3' side of pyrimidine nucleotides. Acts on single-stranded and double-stranded RNA (By similarity).</text>
</comment>
<comment type="catalytic activity">
    <reaction>
        <text>an [RNA] containing cytidine + H2O = an [RNA]-3'-cytidine-3'-phosphate + a 5'-hydroxy-ribonucleotide-3'-[RNA].</text>
        <dbReference type="EC" id="4.6.1.18"/>
    </reaction>
</comment>
<comment type="catalytic activity">
    <reaction>
        <text>an [RNA] containing uridine + H2O = an [RNA]-3'-uridine-3'-phosphate + a 5'-hydroxy-ribonucleotide-3'-[RNA].</text>
        <dbReference type="EC" id="4.6.1.18"/>
    </reaction>
</comment>
<comment type="subunit">
    <text evidence="1">Monomer. Interacts with and forms tight 1:1 complexes with RNH1. Dimerization of two such complexes may occur. Interaction with RNH1 inhibits this protein (By similarity).</text>
</comment>
<comment type="subcellular location">
    <subcellularLocation>
        <location evidence="1">Secreted</location>
    </subcellularLocation>
</comment>
<comment type="similarity">
    <text evidence="4">Belongs to the pancreatic ribonuclease family.</text>
</comment>
<reference key="1">
    <citation type="journal article" date="2002" name="Nat. Genet.">
        <title>Adaptive evolution of a duplicated pancreatic ribonuclease gene in a leaf-eating monkey.</title>
        <authorList>
            <person name="Zhang J."/>
            <person name="Zhang Y.-P."/>
            <person name="Rosenberg H.F."/>
        </authorList>
    </citation>
    <scope>NUCLEOTIDE SEQUENCE [GENOMIC DNA]</scope>
</reference>
<keyword id="KW-1015">Disulfide bond</keyword>
<keyword id="KW-0255">Endonuclease</keyword>
<keyword id="KW-0325">Glycoprotein</keyword>
<keyword id="KW-0378">Hydrolase</keyword>
<keyword id="KW-0456">Lyase</keyword>
<keyword id="KW-0540">Nuclease</keyword>
<keyword id="KW-0964">Secreted</keyword>
<keyword id="KW-0732">Signal</keyword>
<gene>
    <name type="primary">RNASE1</name>
    <name type="synonym">RNS1</name>
</gene>
<dbReference type="EC" id="4.6.1.18"/>
<dbReference type="EMBL" id="AF449639">
    <property type="protein sequence ID" value="AAL87060.1"/>
    <property type="molecule type" value="Genomic_DNA"/>
</dbReference>
<dbReference type="SMR" id="Q8SQ06"/>
<dbReference type="GlyCosmos" id="Q8SQ06">
    <property type="glycosylation" value="3 sites, No reported glycans"/>
</dbReference>
<dbReference type="OrthoDB" id="8573660at2759"/>
<dbReference type="GO" id="GO:0005576">
    <property type="term" value="C:extracellular region"/>
    <property type="evidence" value="ECO:0007669"/>
    <property type="project" value="UniProtKB-SubCell"/>
</dbReference>
<dbReference type="GO" id="GO:0016829">
    <property type="term" value="F:lyase activity"/>
    <property type="evidence" value="ECO:0007669"/>
    <property type="project" value="UniProtKB-KW"/>
</dbReference>
<dbReference type="GO" id="GO:0003676">
    <property type="term" value="F:nucleic acid binding"/>
    <property type="evidence" value="ECO:0007669"/>
    <property type="project" value="InterPro"/>
</dbReference>
<dbReference type="GO" id="GO:0004522">
    <property type="term" value="F:ribonuclease A activity"/>
    <property type="evidence" value="ECO:0007669"/>
    <property type="project" value="UniProtKB-EC"/>
</dbReference>
<dbReference type="GO" id="GO:0050830">
    <property type="term" value="P:defense response to Gram-positive bacterium"/>
    <property type="evidence" value="ECO:0007669"/>
    <property type="project" value="TreeGrafter"/>
</dbReference>
<dbReference type="CDD" id="cd06265">
    <property type="entry name" value="RNase_A_canonical"/>
    <property type="match status" value="1"/>
</dbReference>
<dbReference type="FunFam" id="3.10.130.10:FF:000001">
    <property type="entry name" value="Ribonuclease pancreatic"/>
    <property type="match status" value="1"/>
</dbReference>
<dbReference type="Gene3D" id="3.10.130.10">
    <property type="entry name" value="Ribonuclease A-like domain"/>
    <property type="match status" value="1"/>
</dbReference>
<dbReference type="InterPro" id="IPR001427">
    <property type="entry name" value="RNaseA"/>
</dbReference>
<dbReference type="InterPro" id="IPR036816">
    <property type="entry name" value="RNaseA-like_dom_sf"/>
</dbReference>
<dbReference type="InterPro" id="IPR023411">
    <property type="entry name" value="RNaseA_AS"/>
</dbReference>
<dbReference type="InterPro" id="IPR023412">
    <property type="entry name" value="RNaseA_domain"/>
</dbReference>
<dbReference type="PANTHER" id="PTHR11437">
    <property type="entry name" value="RIBONUCLEASE"/>
    <property type="match status" value="1"/>
</dbReference>
<dbReference type="PANTHER" id="PTHR11437:SF24">
    <property type="entry name" value="RIBONUCLEASE PANCREATIC"/>
    <property type="match status" value="1"/>
</dbReference>
<dbReference type="Pfam" id="PF00074">
    <property type="entry name" value="RnaseA"/>
    <property type="match status" value="1"/>
</dbReference>
<dbReference type="PRINTS" id="PR00794">
    <property type="entry name" value="RIBONUCLEASE"/>
</dbReference>
<dbReference type="SMART" id="SM00092">
    <property type="entry name" value="RNAse_Pc"/>
    <property type="match status" value="1"/>
</dbReference>
<dbReference type="SUPFAM" id="SSF54076">
    <property type="entry name" value="RNase A-like"/>
    <property type="match status" value="1"/>
</dbReference>
<dbReference type="PROSITE" id="PS00127">
    <property type="entry name" value="RNASE_PANCREATIC"/>
    <property type="match status" value="1"/>
</dbReference>